<keyword id="KW-0997">Cell inner membrane</keyword>
<keyword id="KW-1003">Cell membrane</keyword>
<keyword id="KW-0143">Chaperone</keyword>
<keyword id="KW-0472">Membrane</keyword>
<keyword id="KW-0653">Protein transport</keyword>
<keyword id="KW-0812">Transmembrane</keyword>
<keyword id="KW-1133">Transmembrane helix</keyword>
<keyword id="KW-0813">Transport</keyword>
<accession>Q57HZ7</accession>
<proteinExistence type="inferred from homology"/>
<evidence type="ECO:0000255" key="1">
    <source>
        <dbReference type="HAMAP-Rule" id="MF_01810"/>
    </source>
</evidence>
<evidence type="ECO:0000256" key="2">
    <source>
        <dbReference type="SAM" id="MobiDB-lite"/>
    </source>
</evidence>
<protein>
    <recommendedName>
        <fullName evidence="1">Membrane protein insertase YidC</fullName>
    </recommendedName>
    <alternativeName>
        <fullName evidence="1">Foldase YidC</fullName>
    </alternativeName>
    <alternativeName>
        <fullName evidence="1">Membrane integrase YidC</fullName>
    </alternativeName>
    <alternativeName>
        <fullName evidence="1">Membrane protein YidC</fullName>
    </alternativeName>
</protein>
<organism>
    <name type="scientific">Salmonella choleraesuis (strain SC-B67)</name>
    <dbReference type="NCBI Taxonomy" id="321314"/>
    <lineage>
        <taxon>Bacteria</taxon>
        <taxon>Pseudomonadati</taxon>
        <taxon>Pseudomonadota</taxon>
        <taxon>Gammaproteobacteria</taxon>
        <taxon>Enterobacterales</taxon>
        <taxon>Enterobacteriaceae</taxon>
        <taxon>Salmonella</taxon>
    </lineage>
</organism>
<sequence>MDSQRNLLVIALLFVSFMIWQAWEQDKNPQPQTQQTTQTTTTAAGSAADQGVPASGQGKMITVKTDVLDLTINTHGGDVEQALLPAYPKELGSNEPFQLLETTPQFIYQAQSGLTGRDGPDNPANGPRPLYNVEKDAFVLADGQNELQVPMTYTDAAGNTFTQTFVFKRGDYAVNVNYSVQNTGEKPLEVSTFGQLKQSVNLPPHRDTGSSNFALHTFRGAAYSTPDEKYEKYKFDTIADNENLNVSSKGGWVAMLQQYFATAWIPRNDGTNNFYTANLGNGIVAIGYKAQPVLVQPGQTSAMTSTLWVGPEIQDKMAAVAPHLDLTVDYGWLWFISQPLFKLLKWIHSFVGNWGFSIIIITFIVRGIMYPLTKAQYTSMAKMRMLQPKIQAMRERLGDDKQRQSQEMMALYKAEKVNPLGGCFPLIIQMPIFLALYYMLMGSIELRHAPFALWIHDLSAQDPYYILPILMGVTMFFIQKMSPTTVTDPMQQKIMTFMPVIFTVFFLWFPSGLVLYYIVSNLVTIIQQQLIYRGLEKRGLHSREKKKS</sequence>
<name>YIDC_SALCH</name>
<feature type="chain" id="PRO_1000070162" description="Membrane protein insertase YidC">
    <location>
        <begin position="1"/>
        <end position="548"/>
    </location>
</feature>
<feature type="transmembrane region" description="Helical" evidence="1">
    <location>
        <begin position="6"/>
        <end position="26"/>
    </location>
</feature>
<feature type="transmembrane region" description="Helical" evidence="1">
    <location>
        <begin position="350"/>
        <end position="370"/>
    </location>
</feature>
<feature type="transmembrane region" description="Helical" evidence="1">
    <location>
        <begin position="424"/>
        <end position="444"/>
    </location>
</feature>
<feature type="transmembrane region" description="Helical" evidence="1">
    <location>
        <begin position="458"/>
        <end position="478"/>
    </location>
</feature>
<feature type="transmembrane region" description="Helical" evidence="1">
    <location>
        <begin position="499"/>
        <end position="519"/>
    </location>
</feature>
<feature type="region of interest" description="Disordered" evidence="2">
    <location>
        <begin position="28"/>
        <end position="56"/>
    </location>
</feature>
<feature type="compositionally biased region" description="Low complexity" evidence="2">
    <location>
        <begin position="29"/>
        <end position="42"/>
    </location>
</feature>
<comment type="function">
    <text evidence="1">Required for the insertion and/or proper folding and/or complex formation of integral membrane proteins into the membrane. Involved in integration of membrane proteins that insert both dependently and independently of the Sec translocase complex, as well as at least some lipoproteins. Aids folding of multispanning membrane proteins.</text>
</comment>
<comment type="subunit">
    <text evidence="1">Interacts with the Sec translocase complex via SecD. Specifically interacts with transmembrane segments of nascent integral membrane proteins during membrane integration.</text>
</comment>
<comment type="subcellular location">
    <subcellularLocation>
        <location evidence="1">Cell inner membrane</location>
        <topology evidence="1">Multi-pass membrane protein</topology>
    </subcellularLocation>
</comment>
<comment type="similarity">
    <text evidence="1">Belongs to the OXA1/ALB3/YidC family. Type 1 subfamily.</text>
</comment>
<dbReference type="EMBL" id="AE017220">
    <property type="protein sequence ID" value="AAX67665.1"/>
    <property type="molecule type" value="Genomic_DNA"/>
</dbReference>
<dbReference type="RefSeq" id="WP_011264424.1">
    <property type="nucleotide sequence ID" value="NC_006905.1"/>
</dbReference>
<dbReference type="SMR" id="Q57HZ7"/>
<dbReference type="KEGG" id="sec:SCH_3759"/>
<dbReference type="HOGENOM" id="CLU_016535_3_0_6"/>
<dbReference type="Proteomes" id="UP000000538">
    <property type="component" value="Chromosome"/>
</dbReference>
<dbReference type="GO" id="GO:0005886">
    <property type="term" value="C:plasma membrane"/>
    <property type="evidence" value="ECO:0007669"/>
    <property type="project" value="UniProtKB-SubCell"/>
</dbReference>
<dbReference type="GO" id="GO:0032977">
    <property type="term" value="F:membrane insertase activity"/>
    <property type="evidence" value="ECO:0007669"/>
    <property type="project" value="InterPro"/>
</dbReference>
<dbReference type="GO" id="GO:0051205">
    <property type="term" value="P:protein insertion into membrane"/>
    <property type="evidence" value="ECO:0007669"/>
    <property type="project" value="TreeGrafter"/>
</dbReference>
<dbReference type="GO" id="GO:0015031">
    <property type="term" value="P:protein transport"/>
    <property type="evidence" value="ECO:0007669"/>
    <property type="project" value="UniProtKB-KW"/>
</dbReference>
<dbReference type="CDD" id="cd20070">
    <property type="entry name" value="5TM_YidC_Alb3"/>
    <property type="match status" value="1"/>
</dbReference>
<dbReference type="CDD" id="cd19961">
    <property type="entry name" value="EcYidC-like_peri"/>
    <property type="match status" value="1"/>
</dbReference>
<dbReference type="FunFam" id="2.70.98.90:FF:000001">
    <property type="entry name" value="Membrane protein insertase YidC"/>
    <property type="match status" value="1"/>
</dbReference>
<dbReference type="Gene3D" id="2.70.98.90">
    <property type="match status" value="1"/>
</dbReference>
<dbReference type="HAMAP" id="MF_01810">
    <property type="entry name" value="YidC_type1"/>
    <property type="match status" value="1"/>
</dbReference>
<dbReference type="InterPro" id="IPR019998">
    <property type="entry name" value="Membr_insert_YidC"/>
</dbReference>
<dbReference type="InterPro" id="IPR028053">
    <property type="entry name" value="Membr_insert_YidC_N"/>
</dbReference>
<dbReference type="InterPro" id="IPR001708">
    <property type="entry name" value="YidC/ALB3/OXA1/COX18"/>
</dbReference>
<dbReference type="InterPro" id="IPR028055">
    <property type="entry name" value="YidC/Oxa/ALB_C"/>
</dbReference>
<dbReference type="InterPro" id="IPR047196">
    <property type="entry name" value="YidC_ALB_C"/>
</dbReference>
<dbReference type="InterPro" id="IPR038221">
    <property type="entry name" value="YidC_periplasmic_sf"/>
</dbReference>
<dbReference type="NCBIfam" id="NF002351">
    <property type="entry name" value="PRK01318.1-1"/>
    <property type="match status" value="1"/>
</dbReference>
<dbReference type="NCBIfam" id="NF002352">
    <property type="entry name" value="PRK01318.1-3"/>
    <property type="match status" value="1"/>
</dbReference>
<dbReference type="NCBIfam" id="NF002353">
    <property type="entry name" value="PRK01318.1-4"/>
    <property type="match status" value="1"/>
</dbReference>
<dbReference type="NCBIfam" id="TIGR03593">
    <property type="entry name" value="yidC_nterm"/>
    <property type="match status" value="1"/>
</dbReference>
<dbReference type="NCBIfam" id="TIGR03592">
    <property type="entry name" value="yidC_oxa1_cterm"/>
    <property type="match status" value="1"/>
</dbReference>
<dbReference type="PANTHER" id="PTHR12428:SF65">
    <property type="entry name" value="CYTOCHROME C OXIDASE ASSEMBLY PROTEIN COX18, MITOCHONDRIAL"/>
    <property type="match status" value="1"/>
</dbReference>
<dbReference type="PANTHER" id="PTHR12428">
    <property type="entry name" value="OXA1"/>
    <property type="match status" value="1"/>
</dbReference>
<dbReference type="Pfam" id="PF02096">
    <property type="entry name" value="60KD_IMP"/>
    <property type="match status" value="1"/>
</dbReference>
<dbReference type="Pfam" id="PF14849">
    <property type="entry name" value="YidC_periplas"/>
    <property type="match status" value="1"/>
</dbReference>
<dbReference type="PRINTS" id="PR00701">
    <property type="entry name" value="60KDINNERMP"/>
</dbReference>
<dbReference type="PRINTS" id="PR01900">
    <property type="entry name" value="YIDCPROTEIN"/>
</dbReference>
<reference key="1">
    <citation type="journal article" date="2005" name="Nucleic Acids Res.">
        <title>The genome sequence of Salmonella enterica serovar Choleraesuis, a highly invasive and resistant zoonotic pathogen.</title>
        <authorList>
            <person name="Chiu C.-H."/>
            <person name="Tang P."/>
            <person name="Chu C."/>
            <person name="Hu S."/>
            <person name="Bao Q."/>
            <person name="Yu J."/>
            <person name="Chou Y.-Y."/>
            <person name="Wang H.-S."/>
            <person name="Lee Y.-S."/>
        </authorList>
    </citation>
    <scope>NUCLEOTIDE SEQUENCE [LARGE SCALE GENOMIC DNA]</scope>
    <source>
        <strain>SC-B67</strain>
    </source>
</reference>
<gene>
    <name evidence="1" type="primary">yidC</name>
    <name type="ordered locus">SCH_3759</name>
</gene>